<organism>
    <name type="scientific">Rattus norvegicus</name>
    <name type="common">Rat</name>
    <dbReference type="NCBI Taxonomy" id="10116"/>
    <lineage>
        <taxon>Eukaryota</taxon>
        <taxon>Metazoa</taxon>
        <taxon>Chordata</taxon>
        <taxon>Craniata</taxon>
        <taxon>Vertebrata</taxon>
        <taxon>Euteleostomi</taxon>
        <taxon>Mammalia</taxon>
        <taxon>Eutheria</taxon>
        <taxon>Euarchontoglires</taxon>
        <taxon>Glires</taxon>
        <taxon>Rodentia</taxon>
        <taxon>Myomorpha</taxon>
        <taxon>Muroidea</taxon>
        <taxon>Muridae</taxon>
        <taxon>Murinae</taxon>
        <taxon>Rattus</taxon>
    </lineage>
</organism>
<protein>
    <recommendedName>
        <fullName>Craniofacial development protein 1</fullName>
    </recommendedName>
    <alternativeName>
        <fullName>Bucentaur</fullName>
    </alternativeName>
</protein>
<name>CFDP1_RAT</name>
<gene>
    <name type="primary">Cfdp1</name>
    <name type="synonym">Bcnt</name>
</gene>
<evidence type="ECO:0000250" key="1"/>
<evidence type="ECO:0000250" key="2">
    <source>
        <dbReference type="UniProtKB" id="Q9UEE9"/>
    </source>
</evidence>
<evidence type="ECO:0000255" key="3">
    <source>
        <dbReference type="PROSITE-ProRule" id="PRU00610"/>
    </source>
</evidence>
<evidence type="ECO:0000256" key="4">
    <source>
        <dbReference type="SAM" id="MobiDB-lite"/>
    </source>
</evidence>
<evidence type="ECO:0007744" key="5">
    <source>
    </source>
</evidence>
<accession>Q75UQ2</accession>
<dbReference type="EMBL" id="AB125856">
    <property type="protein sequence ID" value="BAD01499.1"/>
    <property type="molecule type" value="mRNA"/>
</dbReference>
<dbReference type="EMBL" id="BC067246">
    <property type="protein sequence ID" value="AAH67246.1"/>
    <property type="molecule type" value="mRNA"/>
</dbReference>
<dbReference type="RefSeq" id="NP_955410.1">
    <property type="nucleotide sequence ID" value="NM_199378.5"/>
</dbReference>
<dbReference type="SMR" id="Q75UQ2"/>
<dbReference type="FunCoup" id="Q75UQ2">
    <property type="interactions" value="3370"/>
</dbReference>
<dbReference type="STRING" id="10116.ENSRNOP00000026249"/>
<dbReference type="GlyGen" id="Q75UQ2">
    <property type="glycosylation" value="1 site"/>
</dbReference>
<dbReference type="iPTMnet" id="Q75UQ2"/>
<dbReference type="PhosphoSitePlus" id="Q75UQ2"/>
<dbReference type="jPOST" id="Q75UQ2"/>
<dbReference type="PaxDb" id="10116-ENSRNOP00000026249"/>
<dbReference type="Ensembl" id="ENSRNOT00000112483.1">
    <property type="protein sequence ID" value="ENSRNOP00000083789.1"/>
    <property type="gene ID" value="ENSRNOG00000019326.6"/>
</dbReference>
<dbReference type="GeneID" id="292027"/>
<dbReference type="KEGG" id="rno:292027"/>
<dbReference type="UCSC" id="RGD:735080">
    <property type="organism name" value="rat"/>
</dbReference>
<dbReference type="AGR" id="RGD:735080"/>
<dbReference type="CTD" id="10428"/>
<dbReference type="RGD" id="735080">
    <property type="gene designation" value="Cfdp1"/>
</dbReference>
<dbReference type="eggNOG" id="KOG4776">
    <property type="taxonomic scope" value="Eukaryota"/>
</dbReference>
<dbReference type="GeneTree" id="ENSGT00390000018141"/>
<dbReference type="HOGENOM" id="CLU_080190_0_0_1"/>
<dbReference type="InParanoid" id="Q75UQ2"/>
<dbReference type="OrthoDB" id="445677at2759"/>
<dbReference type="PhylomeDB" id="Q75UQ2"/>
<dbReference type="TreeFam" id="TF313182"/>
<dbReference type="PRO" id="PR:Q75UQ2"/>
<dbReference type="Proteomes" id="UP000002494">
    <property type="component" value="Chromosome 19"/>
</dbReference>
<dbReference type="Bgee" id="ENSRNOG00000019326">
    <property type="expression patterns" value="Expressed in ovary and 20 other cell types or tissues"/>
</dbReference>
<dbReference type="ExpressionAtlas" id="Q75UQ2">
    <property type="expression patterns" value="baseline and differential"/>
</dbReference>
<dbReference type="GO" id="GO:0000776">
    <property type="term" value="C:kinetochore"/>
    <property type="evidence" value="ECO:0007669"/>
    <property type="project" value="UniProtKB-KW"/>
</dbReference>
<dbReference type="GO" id="GO:0000812">
    <property type="term" value="C:Swr1 complex"/>
    <property type="evidence" value="ECO:0000318"/>
    <property type="project" value="GO_Central"/>
</dbReference>
<dbReference type="GO" id="GO:0007155">
    <property type="term" value="P:cell adhesion"/>
    <property type="evidence" value="ECO:0000266"/>
    <property type="project" value="RGD"/>
</dbReference>
<dbReference type="GO" id="GO:0006338">
    <property type="term" value="P:chromatin remodeling"/>
    <property type="evidence" value="ECO:0000318"/>
    <property type="project" value="GO_Central"/>
</dbReference>
<dbReference type="GO" id="GO:0044346">
    <property type="term" value="P:fibroblast apoptotic process"/>
    <property type="evidence" value="ECO:0000266"/>
    <property type="project" value="RGD"/>
</dbReference>
<dbReference type="GO" id="GO:2000270">
    <property type="term" value="P:negative regulation of fibroblast apoptotic process"/>
    <property type="evidence" value="ECO:0000266"/>
    <property type="project" value="RGD"/>
</dbReference>
<dbReference type="GO" id="GO:0042127">
    <property type="term" value="P:regulation of cell population proliferation"/>
    <property type="evidence" value="ECO:0000266"/>
    <property type="project" value="RGD"/>
</dbReference>
<dbReference type="GO" id="GO:0008360">
    <property type="term" value="P:regulation of cell shape"/>
    <property type="evidence" value="ECO:0000266"/>
    <property type="project" value="RGD"/>
</dbReference>
<dbReference type="InterPro" id="IPR011421">
    <property type="entry name" value="BCNT-C"/>
</dbReference>
<dbReference type="InterPro" id="IPR027124">
    <property type="entry name" value="Swc5/CFDP1/2"/>
</dbReference>
<dbReference type="PANTHER" id="PTHR48407">
    <property type="entry name" value="CRANIOFACIAL DEVELOPMENT PROTEIN 1"/>
    <property type="match status" value="1"/>
</dbReference>
<dbReference type="PANTHER" id="PTHR48407:SF1">
    <property type="entry name" value="CRANIOFACIAL DEVELOPMENT PROTEIN 1"/>
    <property type="match status" value="1"/>
</dbReference>
<dbReference type="Pfam" id="PF07572">
    <property type="entry name" value="BCNT"/>
    <property type="match status" value="1"/>
</dbReference>
<dbReference type="PROSITE" id="PS51279">
    <property type="entry name" value="BCNT_C"/>
    <property type="match status" value="1"/>
</dbReference>
<reference key="1">
    <citation type="submission" date="2003-11" db="EMBL/GenBank/DDBJ databases">
        <title>Diversity and analysis of novel type protein with interspersed repeated sequence region.</title>
        <authorList>
            <person name="Nakashima K."/>
            <person name="Kubo Y."/>
            <person name="Iwashita S."/>
        </authorList>
    </citation>
    <scope>NUCLEOTIDE SEQUENCE [MRNA]</scope>
    <source>
        <strain>Wistar</strain>
        <tissue>Head</tissue>
    </source>
</reference>
<reference key="2">
    <citation type="journal article" date="2004" name="Genome Res.">
        <title>The status, quality, and expansion of the NIH full-length cDNA project: the Mammalian Gene Collection (MGC).</title>
        <authorList>
            <consortium name="The MGC Project Team"/>
        </authorList>
    </citation>
    <scope>NUCLEOTIDE SEQUENCE [LARGE SCALE MRNA]</scope>
    <source>
        <tissue>Pituitary</tissue>
    </source>
</reference>
<reference key="3">
    <citation type="journal article" date="2012" name="Nat. Commun.">
        <title>Quantitative maps of protein phosphorylation sites across 14 different rat organs and tissues.</title>
        <authorList>
            <person name="Lundby A."/>
            <person name="Secher A."/>
            <person name="Lage K."/>
            <person name="Nordsborg N.B."/>
            <person name="Dmytriyev A."/>
            <person name="Lundby C."/>
            <person name="Olsen J.V."/>
        </authorList>
    </citation>
    <scope>PHOSPHORYLATION [LARGE SCALE ANALYSIS] AT SER-80; SER-83 AND SER-84</scope>
    <scope>IDENTIFICATION BY MASS SPECTROMETRY [LARGE SCALE ANALYSIS]</scope>
</reference>
<sequence>MEEFDSEDFSTSDEDEDYVPSGGEYSEDDVNELVKEDEVDGEEQAEKTKGKRRKAQSIPARKRKQSGLLLDEEEDGEEDSGGSSREEDEEEQEGGLGSETSRKKKEDELWASFLNDVGTKSKAASSSQVKVAEETEETSSSKPLVKADELEKPKESEKVKITKVFDFAGEEVRVTKEVDATSKEAKSFLKQTEKEKPQALVTSAATPPPAGSGIKRTSGMSSLLGKIGAKKQKMSTLEKSKLDWESFKEEEGIGEELAIHNRGKEGYIERKAFLERVDHRQFEIERDLRLSKMKP</sequence>
<comment type="function">
    <text evidence="1">May play a role during embryogenesis.</text>
</comment>
<comment type="subcellular location">
    <subcellularLocation>
        <location evidence="2">Chromosome</location>
        <location evidence="2">Centromere</location>
        <location evidence="2">Kinetochore</location>
    </subcellularLocation>
</comment>
<proteinExistence type="evidence at protein level"/>
<keyword id="KW-0137">Centromere</keyword>
<keyword id="KW-0158">Chromosome</keyword>
<keyword id="KW-0217">Developmental protein</keyword>
<keyword id="KW-1017">Isopeptide bond</keyword>
<keyword id="KW-0995">Kinetochore</keyword>
<keyword id="KW-0488">Methylation</keyword>
<keyword id="KW-0597">Phosphoprotein</keyword>
<keyword id="KW-1185">Reference proteome</keyword>
<keyword id="KW-0832">Ubl conjugation</keyword>
<feature type="chain" id="PRO_0000212497" description="Craniofacial development protein 1">
    <location>
        <begin position="1"/>
        <end position="295"/>
    </location>
</feature>
<feature type="domain" description="BCNT-C" evidence="3">
    <location>
        <begin position="214"/>
        <end position="295"/>
    </location>
</feature>
<feature type="region of interest" description="Disordered" evidence="4">
    <location>
        <begin position="1"/>
        <end position="155"/>
    </location>
</feature>
<feature type="region of interest" description="Hydrophilic">
    <location>
        <begin position="174"/>
        <end position="213"/>
    </location>
</feature>
<feature type="region of interest" description="Disordered" evidence="4">
    <location>
        <begin position="188"/>
        <end position="219"/>
    </location>
</feature>
<feature type="compositionally biased region" description="Acidic residues" evidence="4">
    <location>
        <begin position="1"/>
        <end position="18"/>
    </location>
</feature>
<feature type="compositionally biased region" description="Acidic residues" evidence="4">
    <location>
        <begin position="25"/>
        <end position="43"/>
    </location>
</feature>
<feature type="compositionally biased region" description="Basic residues" evidence="4">
    <location>
        <begin position="49"/>
        <end position="65"/>
    </location>
</feature>
<feature type="compositionally biased region" description="Acidic residues" evidence="4">
    <location>
        <begin position="70"/>
        <end position="93"/>
    </location>
</feature>
<feature type="compositionally biased region" description="Low complexity" evidence="4">
    <location>
        <begin position="120"/>
        <end position="130"/>
    </location>
</feature>
<feature type="compositionally biased region" description="Basic and acidic residues" evidence="4">
    <location>
        <begin position="145"/>
        <end position="155"/>
    </location>
</feature>
<feature type="compositionally biased region" description="Basic and acidic residues" evidence="4">
    <location>
        <begin position="188"/>
        <end position="197"/>
    </location>
</feature>
<feature type="modified residue" description="Phosphoserine" evidence="5">
    <location>
        <position position="80"/>
    </location>
</feature>
<feature type="modified residue" description="Phosphoserine" evidence="5">
    <location>
        <position position="83"/>
    </location>
</feature>
<feature type="modified residue" description="Phosphoserine" evidence="5">
    <location>
        <position position="84"/>
    </location>
</feature>
<feature type="modified residue" description="Phosphoserine" evidence="2">
    <location>
        <position position="112"/>
    </location>
</feature>
<feature type="modified residue" description="Phosphoserine" evidence="2">
    <location>
        <position position="212"/>
    </location>
</feature>
<feature type="modified residue" description="N6-methyllysine" evidence="2">
    <location>
        <position position="215"/>
    </location>
</feature>
<feature type="modified residue" description="Phosphoserine" evidence="2">
    <location>
        <position position="246"/>
    </location>
</feature>
<feature type="cross-link" description="Glycyl lysine isopeptide (Lys-Gly) (interchain with G-Cter in SUMO2)" evidence="2">
    <location>
        <position position="146"/>
    </location>
</feature>